<organism>
    <name type="scientific">Staphylococcus xylosus</name>
    <dbReference type="NCBI Taxonomy" id="1288"/>
    <lineage>
        <taxon>Bacteria</taxon>
        <taxon>Bacillati</taxon>
        <taxon>Bacillota</taxon>
        <taxon>Bacilli</taxon>
        <taxon>Bacillales</taxon>
        <taxon>Staphylococcaceae</taxon>
        <taxon>Staphylococcus</taxon>
    </lineage>
</organism>
<evidence type="ECO:0000255" key="1">
    <source>
        <dbReference type="HAMAP-Rule" id="MF_01385"/>
    </source>
</evidence>
<dbReference type="EMBL" id="Z35136">
    <property type="protein sequence ID" value="CAA84508.1"/>
    <property type="molecule type" value="Genomic_DNA"/>
</dbReference>
<dbReference type="SMR" id="P42876"/>
<dbReference type="STRING" id="1288.AWC37_10775"/>
<dbReference type="eggNOG" id="COG0830">
    <property type="taxonomic scope" value="Bacteria"/>
</dbReference>
<dbReference type="GO" id="GO:0005737">
    <property type="term" value="C:cytoplasm"/>
    <property type="evidence" value="ECO:0007669"/>
    <property type="project" value="UniProtKB-SubCell"/>
</dbReference>
<dbReference type="GO" id="GO:0016151">
    <property type="term" value="F:nickel cation binding"/>
    <property type="evidence" value="ECO:0007669"/>
    <property type="project" value="InterPro"/>
</dbReference>
<dbReference type="Gene3D" id="1.10.4190.10">
    <property type="entry name" value="Urease accessory protein UreF"/>
    <property type="match status" value="1"/>
</dbReference>
<dbReference type="HAMAP" id="MF_01385">
    <property type="entry name" value="UreF"/>
    <property type="match status" value="1"/>
</dbReference>
<dbReference type="InterPro" id="IPR002639">
    <property type="entry name" value="UreF"/>
</dbReference>
<dbReference type="InterPro" id="IPR038277">
    <property type="entry name" value="UreF_sf"/>
</dbReference>
<dbReference type="PANTHER" id="PTHR33620">
    <property type="entry name" value="UREASE ACCESSORY PROTEIN F"/>
    <property type="match status" value="1"/>
</dbReference>
<dbReference type="PANTHER" id="PTHR33620:SF1">
    <property type="entry name" value="UREASE ACCESSORY PROTEIN F"/>
    <property type="match status" value="1"/>
</dbReference>
<dbReference type="Pfam" id="PF01730">
    <property type="entry name" value="UreF"/>
    <property type="match status" value="1"/>
</dbReference>
<dbReference type="PIRSF" id="PIRSF009467">
    <property type="entry name" value="Ureas_acces_UreF"/>
    <property type="match status" value="1"/>
</dbReference>
<reference key="1">
    <citation type="thesis" date="1994" institute="Saarland University" country="Germany">
        <authorList>
            <person name="Jose J."/>
        </authorList>
    </citation>
    <scope>NUCLEOTIDE SEQUENCE [GENOMIC DNA]</scope>
    <source>
        <strain>DSM 20267 / Isolate C2A</strain>
    </source>
</reference>
<sequence length="189" mass="21987">MIDHAHLRLFQFCDSQFPTGAFSHSFGLETYIQRDIVHDEQSFQQWLILFLNEQLTYADGLTMRLVYNALEQDDAQAILRLDRILFVQNLPKETRQGSKQMGNRMVKLASELYDSDWLDWYHAQMLDKKAILHPAICFTMLGHHLEVDIETIIDYYLYQNVSSLTQNAVRAIPLGQTAGQRIVHQMIPS</sequence>
<accession>P42876</accession>
<gene>
    <name evidence="1" type="primary">ureF</name>
</gene>
<proteinExistence type="inferred from homology"/>
<feature type="chain" id="PRO_0000067653" description="Urease accessory protein UreF">
    <location>
        <begin position="1"/>
        <end position="189" status="greater than"/>
    </location>
</feature>
<feature type="non-terminal residue">
    <location>
        <position position="189"/>
    </location>
</feature>
<comment type="function">
    <text evidence="1">Required for maturation of urease via the functional incorporation of the urease nickel metallocenter.</text>
</comment>
<comment type="subunit">
    <text evidence="1">UreD, UreF and UreG form a complex that acts as a GTP-hydrolysis-dependent molecular chaperone, activating the urease apoprotein by helping to assemble the nickel containing metallocenter of UreC. The UreE protein probably delivers the nickel.</text>
</comment>
<comment type="subcellular location">
    <subcellularLocation>
        <location evidence="1">Cytoplasm</location>
    </subcellularLocation>
</comment>
<comment type="similarity">
    <text evidence="1">Belongs to the UreF family.</text>
</comment>
<keyword id="KW-0143">Chaperone</keyword>
<keyword id="KW-0963">Cytoplasm</keyword>
<keyword id="KW-0996">Nickel insertion</keyword>
<name>UREF_STAXY</name>
<protein>
    <recommendedName>
        <fullName evidence="1">Urease accessory protein UreF</fullName>
    </recommendedName>
</protein>